<evidence type="ECO:0000255" key="1">
    <source>
        <dbReference type="HAMAP-Rule" id="MF_00308"/>
    </source>
</evidence>
<evidence type="ECO:0000305" key="2"/>
<comment type="function">
    <text evidence="1">Molecular chaperone capable of stabilizing a range of proteins.</text>
</comment>
<comment type="subcellular location">
    <subcellularLocation>
        <location evidence="1">Cytoplasm</location>
    </subcellularLocation>
</comment>
<comment type="similarity">
    <text evidence="2">Belongs to the prefoldin subunit alpha family.</text>
</comment>
<organism>
    <name type="scientific">Aquifex aeolicus (strain VF5)</name>
    <dbReference type="NCBI Taxonomy" id="224324"/>
    <lineage>
        <taxon>Bacteria</taxon>
        <taxon>Pseudomonadati</taxon>
        <taxon>Aquificota</taxon>
        <taxon>Aquificia</taxon>
        <taxon>Aquificales</taxon>
        <taxon>Aquificaceae</taxon>
        <taxon>Aquifex</taxon>
    </lineage>
</organism>
<accession>O66961</accession>
<feature type="chain" id="PRO_0000153692" description="Putative prefoldin subunit alpha">
    <location>
        <begin position="1"/>
        <end position="149"/>
    </location>
</feature>
<protein>
    <recommendedName>
        <fullName evidence="1">Putative prefoldin subunit alpha</fullName>
    </recommendedName>
</protein>
<keyword id="KW-0143">Chaperone</keyword>
<keyword id="KW-0963">Cytoplasm</keyword>
<keyword id="KW-1185">Reference proteome</keyword>
<name>PFDA_AQUAE</name>
<gene>
    <name type="ordered locus">aq_759</name>
</gene>
<proteinExistence type="inferred from homology"/>
<reference key="1">
    <citation type="journal article" date="1998" name="Nature">
        <title>The complete genome of the hyperthermophilic bacterium Aquifex aeolicus.</title>
        <authorList>
            <person name="Deckert G."/>
            <person name="Warren P.V."/>
            <person name="Gaasterland T."/>
            <person name="Young W.G."/>
            <person name="Lenox A.L."/>
            <person name="Graham D.E."/>
            <person name="Overbeek R."/>
            <person name="Snead M.A."/>
            <person name="Keller M."/>
            <person name="Aujay M."/>
            <person name="Huber R."/>
            <person name="Feldman R.A."/>
            <person name="Short J.M."/>
            <person name="Olsen G.J."/>
            <person name="Swanson R.V."/>
        </authorList>
    </citation>
    <scope>NUCLEOTIDE SEQUENCE [LARGE SCALE GENOMIC DNA]</scope>
    <source>
        <strain>VF5</strain>
    </source>
</reference>
<sequence length="149" mass="16598">MAEEKKEVQKTPEQKMDELNRQLRGYMANIEALRAEISVINQSITDLRTAEATLRSLKELGKGKEVLIPVGATAQIKAKSEGVDEVIMSIGTGISAVMSYDEAVDRIRKEIAALEALRRALEEAIADLYNKIEELLEEVRKVGQEEAKK</sequence>
<dbReference type="EMBL" id="AE000657">
    <property type="protein sequence ID" value="AAC06929.1"/>
    <property type="molecule type" value="Genomic_DNA"/>
</dbReference>
<dbReference type="PIR" id="F70366">
    <property type="entry name" value="F70366"/>
</dbReference>
<dbReference type="RefSeq" id="NP_213522.1">
    <property type="nucleotide sequence ID" value="NC_000918.1"/>
</dbReference>
<dbReference type="RefSeq" id="WP_010880460.1">
    <property type="nucleotide sequence ID" value="NC_000918.1"/>
</dbReference>
<dbReference type="SMR" id="O66961"/>
<dbReference type="STRING" id="224324.aq_759"/>
<dbReference type="EnsemblBacteria" id="AAC06929">
    <property type="protein sequence ID" value="AAC06929"/>
    <property type="gene ID" value="aq_759"/>
</dbReference>
<dbReference type="KEGG" id="aae:aq_759"/>
<dbReference type="eggNOG" id="COG1730">
    <property type="taxonomic scope" value="Bacteria"/>
</dbReference>
<dbReference type="HOGENOM" id="CLU_091867_1_3_0"/>
<dbReference type="InParanoid" id="O66961"/>
<dbReference type="OrthoDB" id="13693at2"/>
<dbReference type="Proteomes" id="UP000000798">
    <property type="component" value="Chromosome"/>
</dbReference>
<dbReference type="GO" id="GO:0005737">
    <property type="term" value="C:cytoplasm"/>
    <property type="evidence" value="ECO:0000318"/>
    <property type="project" value="GO_Central"/>
</dbReference>
<dbReference type="GO" id="GO:0016272">
    <property type="term" value="C:prefoldin complex"/>
    <property type="evidence" value="ECO:0000318"/>
    <property type="project" value="GO_Central"/>
</dbReference>
<dbReference type="GO" id="GO:0051082">
    <property type="term" value="F:unfolded protein binding"/>
    <property type="evidence" value="ECO:0007669"/>
    <property type="project" value="UniProtKB-UniRule"/>
</dbReference>
<dbReference type="GO" id="GO:0006457">
    <property type="term" value="P:protein folding"/>
    <property type="evidence" value="ECO:0007669"/>
    <property type="project" value="UniProtKB-UniRule"/>
</dbReference>
<dbReference type="CDD" id="cd23160">
    <property type="entry name" value="Prefoldin_alpha_GimC"/>
    <property type="match status" value="1"/>
</dbReference>
<dbReference type="FunFam" id="1.10.287.370:FF:000027">
    <property type="entry name" value="Prefoldin subunit alpha 1"/>
    <property type="match status" value="1"/>
</dbReference>
<dbReference type="Gene3D" id="1.10.287.370">
    <property type="match status" value="1"/>
</dbReference>
<dbReference type="HAMAP" id="MF_00308">
    <property type="entry name" value="PfdA"/>
    <property type="match status" value="1"/>
</dbReference>
<dbReference type="InterPro" id="IPR011599">
    <property type="entry name" value="PFD_alpha_archaea"/>
</dbReference>
<dbReference type="InterPro" id="IPR009053">
    <property type="entry name" value="Prefoldin"/>
</dbReference>
<dbReference type="InterPro" id="IPR004127">
    <property type="entry name" value="Prefoldin_subunit_alpha"/>
</dbReference>
<dbReference type="NCBIfam" id="TIGR00293">
    <property type="entry name" value="prefoldin subunit alpha"/>
    <property type="match status" value="1"/>
</dbReference>
<dbReference type="Pfam" id="PF02996">
    <property type="entry name" value="Prefoldin"/>
    <property type="match status" value="1"/>
</dbReference>
<dbReference type="SUPFAM" id="SSF46579">
    <property type="entry name" value="Prefoldin"/>
    <property type="match status" value="1"/>
</dbReference>